<evidence type="ECO:0000250" key="1">
    <source>
        <dbReference type="UniProtKB" id="Q89777"/>
    </source>
</evidence>
<evidence type="ECO:0000305" key="2"/>
<feature type="chain" id="PRO_0000373335" description="Protein MGF 505-5R">
    <location>
        <begin position="1"/>
        <end position="498"/>
    </location>
</feature>
<sequence>MFSLQEICRKNIYFLPDWLSEHVIQRLGLYWEKHGSLQRIGDDYVLIQQDLIIPINEALRMAGEEGNDEVVQLLLLWEGNIHYAIIGALEGDHYSLIRKLYDQIKDCHNILPLIQDPKTFEKCHELDESCNISCLVLHAVKNDMLCILQEYKMRLSGGDIQEVFETACRSQKYDIVTWMGENIAIYNPGVVFDIAFDLMNVSLLSIGYTLLFNHHINNMNENIDSLLAQHLEWAAGMGLLHFMLETLKYGGDVTITVLSEAVKYDHRKVLDYFLRRKNLYQEDLEELLLLAIRADCSKKTLNLLLSYLNYSINNIRKKILQCVKEYETTIIIKILWKRKINLIGPILADFIGYHSYTYMVDFMREFSIHPEKMIKMAARESREDLIIKFSKNVYKEPKDRLHYLKSLVYTMRHKEGKQLLIYTIHNLYKACHLESKEMFNLARFYARHNAVIQFKSICHDLSKLNINIKNLLLECLRIAIKKNYPQLIRTIKTDMSYE</sequence>
<comment type="function">
    <text evidence="1">Plays a role in virus cell tropism, and may be required for efficient virus replication in macrophages.</text>
</comment>
<comment type="induction">
    <text evidence="2">Expressed in the early phase of the viral replicative cycle.</text>
</comment>
<comment type="similarity">
    <text evidence="2">Belongs to the asfivirus MGF 505 family.</text>
</comment>
<reference key="1">
    <citation type="submission" date="2003-03" db="EMBL/GenBank/DDBJ databases">
        <title>African swine fever virus genomes.</title>
        <authorList>
            <person name="Kutish G.F."/>
            <person name="Rock D.L."/>
        </authorList>
    </citation>
    <scope>NUCLEOTIDE SEQUENCE [LARGE SCALE GENOMIC DNA]</scope>
</reference>
<gene>
    <name type="ordered locus">Pret-041</name>
</gene>
<accession>P0C9T8</accession>
<name>5055R_ASFP4</name>
<keyword id="KW-0244">Early protein</keyword>
<organismHost>
    <name type="scientific">Ornithodoros</name>
    <name type="common">relapsing fever ticks</name>
    <dbReference type="NCBI Taxonomy" id="6937"/>
</organismHost>
<organismHost>
    <name type="scientific">Phacochoerus aethiopicus</name>
    <name type="common">Warthog</name>
    <dbReference type="NCBI Taxonomy" id="85517"/>
</organismHost>
<organismHost>
    <name type="scientific">Phacochoerus africanus</name>
    <name type="common">Warthog</name>
    <dbReference type="NCBI Taxonomy" id="41426"/>
</organismHost>
<organismHost>
    <name type="scientific">Potamochoerus larvatus</name>
    <name type="common">Bushpig</name>
    <dbReference type="NCBI Taxonomy" id="273792"/>
</organismHost>
<organismHost>
    <name type="scientific">Sus scrofa</name>
    <name type="common">Pig</name>
    <dbReference type="NCBI Taxonomy" id="9823"/>
</organismHost>
<organism>
    <name type="scientific">African swine fever virus (isolate Tick/South Africa/Pretoriuskop Pr4/1996)</name>
    <name type="common">ASFV</name>
    <dbReference type="NCBI Taxonomy" id="561443"/>
    <lineage>
        <taxon>Viruses</taxon>
        <taxon>Varidnaviria</taxon>
        <taxon>Bamfordvirae</taxon>
        <taxon>Nucleocytoviricota</taxon>
        <taxon>Pokkesviricetes</taxon>
        <taxon>Asfuvirales</taxon>
        <taxon>Asfarviridae</taxon>
        <taxon>Asfivirus</taxon>
        <taxon>African swine fever virus</taxon>
    </lineage>
</organism>
<proteinExistence type="inferred from homology"/>
<protein>
    <recommendedName>
        <fullName>Protein MGF 505-5R</fullName>
    </recommendedName>
</protein>
<dbReference type="EMBL" id="AY261363">
    <property type="status" value="NOT_ANNOTATED_CDS"/>
    <property type="molecule type" value="Genomic_DNA"/>
</dbReference>
<dbReference type="SMR" id="P0C9T8"/>
<dbReference type="Proteomes" id="UP000000859">
    <property type="component" value="Segment"/>
</dbReference>
<dbReference type="InterPro" id="IPR004858">
    <property type="entry name" value="MGF_505"/>
</dbReference>
<dbReference type="Pfam" id="PF03158">
    <property type="entry name" value="DUF249"/>
    <property type="match status" value="1"/>
</dbReference>